<evidence type="ECO:0000255" key="1">
    <source>
        <dbReference type="HAMAP-Rule" id="MF_01208"/>
    </source>
</evidence>
<name>PYRE_SHIB3</name>
<feature type="chain" id="PRO_1000138832" description="Orotate phosphoribosyltransferase">
    <location>
        <begin position="1"/>
        <end position="213"/>
    </location>
</feature>
<feature type="binding site" description="in other chain" evidence="1">
    <location>
        <position position="26"/>
    </location>
    <ligand>
        <name>5-phospho-alpha-D-ribose 1-diphosphate</name>
        <dbReference type="ChEBI" id="CHEBI:58017"/>
        <note>ligand shared between dimeric partners</note>
    </ligand>
</feature>
<feature type="binding site" evidence="1">
    <location>
        <begin position="34"/>
        <end position="35"/>
    </location>
    <ligand>
        <name>orotate</name>
        <dbReference type="ChEBI" id="CHEBI:30839"/>
    </ligand>
</feature>
<feature type="binding site" description="in other chain" evidence="1">
    <location>
        <begin position="72"/>
        <end position="73"/>
    </location>
    <ligand>
        <name>5-phospho-alpha-D-ribose 1-diphosphate</name>
        <dbReference type="ChEBI" id="CHEBI:58017"/>
        <note>ligand shared between dimeric partners</note>
    </ligand>
</feature>
<feature type="binding site" evidence="1">
    <location>
        <position position="99"/>
    </location>
    <ligand>
        <name>5-phospho-alpha-D-ribose 1-diphosphate</name>
        <dbReference type="ChEBI" id="CHEBI:58017"/>
        <note>ligand shared between dimeric partners</note>
    </ligand>
</feature>
<feature type="binding site" description="in other chain" evidence="1">
    <location>
        <position position="100"/>
    </location>
    <ligand>
        <name>5-phospho-alpha-D-ribose 1-diphosphate</name>
        <dbReference type="ChEBI" id="CHEBI:58017"/>
        <note>ligand shared between dimeric partners</note>
    </ligand>
</feature>
<feature type="binding site" evidence="1">
    <location>
        <position position="103"/>
    </location>
    <ligand>
        <name>5-phospho-alpha-D-ribose 1-diphosphate</name>
        <dbReference type="ChEBI" id="CHEBI:58017"/>
        <note>ligand shared between dimeric partners</note>
    </ligand>
</feature>
<feature type="binding site" evidence="1">
    <location>
        <position position="105"/>
    </location>
    <ligand>
        <name>5-phospho-alpha-D-ribose 1-diphosphate</name>
        <dbReference type="ChEBI" id="CHEBI:58017"/>
        <note>ligand shared between dimeric partners</note>
    </ligand>
</feature>
<feature type="binding site" description="in other chain" evidence="1">
    <location>
        <begin position="124"/>
        <end position="132"/>
    </location>
    <ligand>
        <name>5-phospho-alpha-D-ribose 1-diphosphate</name>
        <dbReference type="ChEBI" id="CHEBI:58017"/>
        <note>ligand shared between dimeric partners</note>
    </ligand>
</feature>
<feature type="binding site" evidence="1">
    <location>
        <position position="128"/>
    </location>
    <ligand>
        <name>orotate</name>
        <dbReference type="ChEBI" id="CHEBI:30839"/>
    </ligand>
</feature>
<feature type="binding site" evidence="1">
    <location>
        <position position="156"/>
    </location>
    <ligand>
        <name>orotate</name>
        <dbReference type="ChEBI" id="CHEBI:30839"/>
    </ligand>
</feature>
<dbReference type="EC" id="2.4.2.10" evidence="1"/>
<dbReference type="EMBL" id="CP001063">
    <property type="protein sequence ID" value="ACD06782.1"/>
    <property type="molecule type" value="Genomic_DNA"/>
</dbReference>
<dbReference type="RefSeq" id="WP_000806161.1">
    <property type="nucleotide sequence ID" value="NC_010658.1"/>
</dbReference>
<dbReference type="SMR" id="B2TTV6"/>
<dbReference type="STRING" id="344609.SbBS512_E4067"/>
<dbReference type="KEGG" id="sbc:SbBS512_E4067"/>
<dbReference type="HOGENOM" id="CLU_074878_0_1_6"/>
<dbReference type="UniPathway" id="UPA00070">
    <property type="reaction ID" value="UER00119"/>
</dbReference>
<dbReference type="Proteomes" id="UP000001030">
    <property type="component" value="Chromosome"/>
</dbReference>
<dbReference type="GO" id="GO:0005737">
    <property type="term" value="C:cytoplasm"/>
    <property type="evidence" value="ECO:0007669"/>
    <property type="project" value="TreeGrafter"/>
</dbReference>
<dbReference type="GO" id="GO:0000287">
    <property type="term" value="F:magnesium ion binding"/>
    <property type="evidence" value="ECO:0007669"/>
    <property type="project" value="UniProtKB-UniRule"/>
</dbReference>
<dbReference type="GO" id="GO:0004588">
    <property type="term" value="F:orotate phosphoribosyltransferase activity"/>
    <property type="evidence" value="ECO:0007669"/>
    <property type="project" value="UniProtKB-UniRule"/>
</dbReference>
<dbReference type="GO" id="GO:0006207">
    <property type="term" value="P:'de novo' pyrimidine nucleobase biosynthetic process"/>
    <property type="evidence" value="ECO:0007669"/>
    <property type="project" value="TreeGrafter"/>
</dbReference>
<dbReference type="GO" id="GO:0044205">
    <property type="term" value="P:'de novo' UMP biosynthetic process"/>
    <property type="evidence" value="ECO:0007669"/>
    <property type="project" value="UniProtKB-UniRule"/>
</dbReference>
<dbReference type="GO" id="GO:0046132">
    <property type="term" value="P:pyrimidine ribonucleoside biosynthetic process"/>
    <property type="evidence" value="ECO:0007669"/>
    <property type="project" value="TreeGrafter"/>
</dbReference>
<dbReference type="CDD" id="cd06223">
    <property type="entry name" value="PRTases_typeI"/>
    <property type="match status" value="1"/>
</dbReference>
<dbReference type="FunFam" id="3.40.50.2020:FF:000008">
    <property type="entry name" value="Orotate phosphoribosyltransferase"/>
    <property type="match status" value="1"/>
</dbReference>
<dbReference type="Gene3D" id="3.40.50.2020">
    <property type="match status" value="1"/>
</dbReference>
<dbReference type="HAMAP" id="MF_01208">
    <property type="entry name" value="PyrE"/>
    <property type="match status" value="1"/>
</dbReference>
<dbReference type="InterPro" id="IPR023031">
    <property type="entry name" value="OPRT"/>
</dbReference>
<dbReference type="InterPro" id="IPR004467">
    <property type="entry name" value="Or_phspho_trans_dom"/>
</dbReference>
<dbReference type="InterPro" id="IPR000836">
    <property type="entry name" value="PRibTrfase_dom"/>
</dbReference>
<dbReference type="InterPro" id="IPR029057">
    <property type="entry name" value="PRTase-like"/>
</dbReference>
<dbReference type="NCBIfam" id="TIGR00336">
    <property type="entry name" value="pyrE"/>
    <property type="match status" value="1"/>
</dbReference>
<dbReference type="PANTHER" id="PTHR46683">
    <property type="entry name" value="OROTATE PHOSPHORIBOSYLTRANSFERASE 1-RELATED"/>
    <property type="match status" value="1"/>
</dbReference>
<dbReference type="PANTHER" id="PTHR46683:SF1">
    <property type="entry name" value="OROTATE PHOSPHORIBOSYLTRANSFERASE 1-RELATED"/>
    <property type="match status" value="1"/>
</dbReference>
<dbReference type="Pfam" id="PF00156">
    <property type="entry name" value="Pribosyltran"/>
    <property type="match status" value="1"/>
</dbReference>
<dbReference type="SUPFAM" id="SSF53271">
    <property type="entry name" value="PRTase-like"/>
    <property type="match status" value="1"/>
</dbReference>
<dbReference type="PROSITE" id="PS00103">
    <property type="entry name" value="PUR_PYR_PR_TRANSFER"/>
    <property type="match status" value="1"/>
</dbReference>
<keyword id="KW-0328">Glycosyltransferase</keyword>
<keyword id="KW-0460">Magnesium</keyword>
<keyword id="KW-0665">Pyrimidine biosynthesis</keyword>
<keyword id="KW-1185">Reference proteome</keyword>
<keyword id="KW-0808">Transferase</keyword>
<proteinExistence type="inferred from homology"/>
<protein>
    <recommendedName>
        <fullName evidence="1">Orotate phosphoribosyltransferase</fullName>
        <shortName evidence="1">OPRT</shortName>
        <shortName evidence="1">OPRTase</shortName>
        <ecNumber evidence="1">2.4.2.10</ecNumber>
    </recommendedName>
</protein>
<sequence length="213" mass="23537">MKPYQRQFIEFALGKQVLKFGEFTLKSGRKSPYFFNAGLFNTGRDLALLGRFYAEALVDSGLEFDLLFGPAYKGIPIATTTAVALAEHHDLDLPYCFNRKEAKDHGEGGNLVGSALQGRVMLVDDVITAGTAIRESMEIIQANGATLAGVLISLDRQERGRGEISAIQEVERDYNCKVISIITLKDLIAYLEEKPEMAEHLAAVKAYREEFGV</sequence>
<gene>
    <name evidence="1" type="primary">pyrE</name>
    <name type="ordered locus">SbBS512_E4067</name>
</gene>
<organism>
    <name type="scientific">Shigella boydii serotype 18 (strain CDC 3083-94 / BS512)</name>
    <dbReference type="NCBI Taxonomy" id="344609"/>
    <lineage>
        <taxon>Bacteria</taxon>
        <taxon>Pseudomonadati</taxon>
        <taxon>Pseudomonadota</taxon>
        <taxon>Gammaproteobacteria</taxon>
        <taxon>Enterobacterales</taxon>
        <taxon>Enterobacteriaceae</taxon>
        <taxon>Shigella</taxon>
    </lineage>
</organism>
<reference key="1">
    <citation type="submission" date="2008-05" db="EMBL/GenBank/DDBJ databases">
        <title>Complete sequence of Shigella boydii serotype 18 strain BS512.</title>
        <authorList>
            <person name="Rasko D.A."/>
            <person name="Rosovitz M."/>
            <person name="Maurelli A.T."/>
            <person name="Myers G."/>
            <person name="Seshadri R."/>
            <person name="Cer R."/>
            <person name="Jiang L."/>
            <person name="Ravel J."/>
            <person name="Sebastian Y."/>
        </authorList>
    </citation>
    <scope>NUCLEOTIDE SEQUENCE [LARGE SCALE GENOMIC DNA]</scope>
    <source>
        <strain>CDC 3083-94 / BS512</strain>
    </source>
</reference>
<accession>B2TTV6</accession>
<comment type="function">
    <text evidence="1">Catalyzes the transfer of a ribosyl phosphate group from 5-phosphoribose 1-diphosphate to orotate, leading to the formation of orotidine monophosphate (OMP).</text>
</comment>
<comment type="catalytic activity">
    <reaction evidence="1">
        <text>orotidine 5'-phosphate + diphosphate = orotate + 5-phospho-alpha-D-ribose 1-diphosphate</text>
        <dbReference type="Rhea" id="RHEA:10380"/>
        <dbReference type="ChEBI" id="CHEBI:30839"/>
        <dbReference type="ChEBI" id="CHEBI:33019"/>
        <dbReference type="ChEBI" id="CHEBI:57538"/>
        <dbReference type="ChEBI" id="CHEBI:58017"/>
        <dbReference type="EC" id="2.4.2.10"/>
    </reaction>
</comment>
<comment type="cofactor">
    <cofactor evidence="1">
        <name>Mg(2+)</name>
        <dbReference type="ChEBI" id="CHEBI:18420"/>
    </cofactor>
</comment>
<comment type="pathway">
    <text evidence="1">Pyrimidine metabolism; UMP biosynthesis via de novo pathway; UMP from orotate: step 1/2.</text>
</comment>
<comment type="subunit">
    <text evidence="1">Homodimer.</text>
</comment>
<comment type="similarity">
    <text evidence="1">Belongs to the purine/pyrimidine phosphoribosyltransferase family. PyrE subfamily.</text>
</comment>